<evidence type="ECO:0000255" key="1">
    <source>
        <dbReference type="HAMAP-Rule" id="MF_00140"/>
    </source>
</evidence>
<comment type="function">
    <text evidence="1">Catalyzes the attachment of tryptophan to tRNA(Trp).</text>
</comment>
<comment type="catalytic activity">
    <reaction evidence="1">
        <text>tRNA(Trp) + L-tryptophan + ATP = L-tryptophyl-tRNA(Trp) + AMP + diphosphate + H(+)</text>
        <dbReference type="Rhea" id="RHEA:24080"/>
        <dbReference type="Rhea" id="RHEA-COMP:9671"/>
        <dbReference type="Rhea" id="RHEA-COMP:9705"/>
        <dbReference type="ChEBI" id="CHEBI:15378"/>
        <dbReference type="ChEBI" id="CHEBI:30616"/>
        <dbReference type="ChEBI" id="CHEBI:33019"/>
        <dbReference type="ChEBI" id="CHEBI:57912"/>
        <dbReference type="ChEBI" id="CHEBI:78442"/>
        <dbReference type="ChEBI" id="CHEBI:78535"/>
        <dbReference type="ChEBI" id="CHEBI:456215"/>
        <dbReference type="EC" id="6.1.1.2"/>
    </reaction>
</comment>
<comment type="subunit">
    <text evidence="1">Homodimer.</text>
</comment>
<comment type="subcellular location">
    <subcellularLocation>
        <location evidence="1">Cytoplasm</location>
    </subcellularLocation>
</comment>
<comment type="similarity">
    <text evidence="1">Belongs to the class-I aminoacyl-tRNA synthetase family.</text>
</comment>
<dbReference type="EC" id="6.1.1.2" evidence="1"/>
<dbReference type="EMBL" id="AE004439">
    <property type="protein sequence ID" value="AAK03705.1"/>
    <property type="molecule type" value="Genomic_DNA"/>
</dbReference>
<dbReference type="RefSeq" id="WP_010907258.1">
    <property type="nucleotide sequence ID" value="NC_002663.1"/>
</dbReference>
<dbReference type="SMR" id="P57956"/>
<dbReference type="STRING" id="272843.PM1621"/>
<dbReference type="EnsemblBacteria" id="AAK03705">
    <property type="protein sequence ID" value="AAK03705"/>
    <property type="gene ID" value="PM1621"/>
</dbReference>
<dbReference type="KEGG" id="pmu:PM1621"/>
<dbReference type="PATRIC" id="fig|272843.6.peg.1641"/>
<dbReference type="HOGENOM" id="CLU_029244_1_1_6"/>
<dbReference type="OrthoDB" id="9801042at2"/>
<dbReference type="Proteomes" id="UP000000809">
    <property type="component" value="Chromosome"/>
</dbReference>
<dbReference type="GO" id="GO:0005829">
    <property type="term" value="C:cytosol"/>
    <property type="evidence" value="ECO:0007669"/>
    <property type="project" value="TreeGrafter"/>
</dbReference>
<dbReference type="GO" id="GO:0005524">
    <property type="term" value="F:ATP binding"/>
    <property type="evidence" value="ECO:0007669"/>
    <property type="project" value="UniProtKB-UniRule"/>
</dbReference>
<dbReference type="GO" id="GO:0004830">
    <property type="term" value="F:tryptophan-tRNA ligase activity"/>
    <property type="evidence" value="ECO:0007669"/>
    <property type="project" value="UniProtKB-UniRule"/>
</dbReference>
<dbReference type="GO" id="GO:0006436">
    <property type="term" value="P:tryptophanyl-tRNA aminoacylation"/>
    <property type="evidence" value="ECO:0007669"/>
    <property type="project" value="UniProtKB-UniRule"/>
</dbReference>
<dbReference type="CDD" id="cd00806">
    <property type="entry name" value="TrpRS_core"/>
    <property type="match status" value="1"/>
</dbReference>
<dbReference type="FunFam" id="1.10.240.10:FF:000002">
    <property type="entry name" value="Tryptophan--tRNA ligase"/>
    <property type="match status" value="1"/>
</dbReference>
<dbReference type="FunFam" id="3.40.50.620:FF:000024">
    <property type="entry name" value="Tryptophan--tRNA ligase"/>
    <property type="match status" value="1"/>
</dbReference>
<dbReference type="Gene3D" id="3.40.50.620">
    <property type="entry name" value="HUPs"/>
    <property type="match status" value="1"/>
</dbReference>
<dbReference type="Gene3D" id="1.10.240.10">
    <property type="entry name" value="Tyrosyl-Transfer RNA Synthetase"/>
    <property type="match status" value="1"/>
</dbReference>
<dbReference type="HAMAP" id="MF_00140_B">
    <property type="entry name" value="Trp_tRNA_synth_B"/>
    <property type="match status" value="1"/>
</dbReference>
<dbReference type="InterPro" id="IPR001412">
    <property type="entry name" value="aa-tRNA-synth_I_CS"/>
</dbReference>
<dbReference type="InterPro" id="IPR002305">
    <property type="entry name" value="aa-tRNA-synth_Ic"/>
</dbReference>
<dbReference type="InterPro" id="IPR014729">
    <property type="entry name" value="Rossmann-like_a/b/a_fold"/>
</dbReference>
<dbReference type="InterPro" id="IPR002306">
    <property type="entry name" value="Trp-tRNA-ligase"/>
</dbReference>
<dbReference type="InterPro" id="IPR024109">
    <property type="entry name" value="Trp-tRNA-ligase_bac-type"/>
</dbReference>
<dbReference type="InterPro" id="IPR050203">
    <property type="entry name" value="Trp-tRNA_synthetase"/>
</dbReference>
<dbReference type="NCBIfam" id="TIGR00233">
    <property type="entry name" value="trpS"/>
    <property type="match status" value="1"/>
</dbReference>
<dbReference type="PANTHER" id="PTHR43766">
    <property type="entry name" value="TRYPTOPHAN--TRNA LIGASE, MITOCHONDRIAL"/>
    <property type="match status" value="1"/>
</dbReference>
<dbReference type="PANTHER" id="PTHR43766:SF1">
    <property type="entry name" value="TRYPTOPHAN--TRNA LIGASE, MITOCHONDRIAL"/>
    <property type="match status" value="1"/>
</dbReference>
<dbReference type="Pfam" id="PF00579">
    <property type="entry name" value="tRNA-synt_1b"/>
    <property type="match status" value="1"/>
</dbReference>
<dbReference type="PRINTS" id="PR01039">
    <property type="entry name" value="TRNASYNTHTRP"/>
</dbReference>
<dbReference type="SUPFAM" id="SSF52374">
    <property type="entry name" value="Nucleotidylyl transferase"/>
    <property type="match status" value="1"/>
</dbReference>
<dbReference type="PROSITE" id="PS00178">
    <property type="entry name" value="AA_TRNA_LIGASE_I"/>
    <property type="match status" value="1"/>
</dbReference>
<name>SYW_PASMU</name>
<organism>
    <name type="scientific">Pasteurella multocida (strain Pm70)</name>
    <dbReference type="NCBI Taxonomy" id="272843"/>
    <lineage>
        <taxon>Bacteria</taxon>
        <taxon>Pseudomonadati</taxon>
        <taxon>Pseudomonadota</taxon>
        <taxon>Gammaproteobacteria</taxon>
        <taxon>Pasteurellales</taxon>
        <taxon>Pasteurellaceae</taxon>
        <taxon>Pasteurella</taxon>
    </lineage>
</organism>
<proteinExistence type="inferred from homology"/>
<protein>
    <recommendedName>
        <fullName evidence="1">Tryptophan--tRNA ligase</fullName>
        <ecNumber evidence="1">6.1.1.2</ecNumber>
    </recommendedName>
    <alternativeName>
        <fullName evidence="1">Tryptophanyl-tRNA synthetase</fullName>
        <shortName evidence="1">TrpRS</shortName>
    </alternativeName>
</protein>
<reference key="1">
    <citation type="journal article" date="2001" name="Proc. Natl. Acad. Sci. U.S.A.">
        <title>Complete genomic sequence of Pasteurella multocida Pm70.</title>
        <authorList>
            <person name="May B.J."/>
            <person name="Zhang Q."/>
            <person name="Li L.L."/>
            <person name="Paustian M.L."/>
            <person name="Whittam T.S."/>
            <person name="Kapur V."/>
        </authorList>
    </citation>
    <scope>NUCLEOTIDE SEQUENCE [LARGE SCALE GENOMIC DNA]</scope>
    <source>
        <strain>Pm70</strain>
    </source>
</reference>
<keyword id="KW-0030">Aminoacyl-tRNA synthetase</keyword>
<keyword id="KW-0067">ATP-binding</keyword>
<keyword id="KW-0963">Cytoplasm</keyword>
<keyword id="KW-0436">Ligase</keyword>
<keyword id="KW-0547">Nucleotide-binding</keyword>
<keyword id="KW-0648">Protein biosynthesis</keyword>
<keyword id="KW-1185">Reference proteome</keyword>
<accession>P57956</accession>
<sequence length="333" mass="37129">MSKPVVLSGVQPSGELTIGNYLGALRQWVKMQDDYECLFCIVDLHAITVRQDPESLRKATLDVLALYLACGIDPEKSTIFIQSHVPEHTQLAWVLNCYTYFGEMGRMTQFKDKSARHAENINVGLFTYPVLMAADILLYQANQVPVGEDQKQHLEITRDIANRFNALYGDLFAVPEPFIPKAGARVMSLLEPEKKMSKSDENRNNVIGLLEDPKAVAKKIKRAVTDSDEPPVVRYDVQNKAGVSNLLDILSGVTGKSIAELETEFEGKMYGHLKGTVADEVSAMLTTLQERFHHFRNNEALLNDIAREGAQKARERAKATLDAVYQAVGFVSL</sequence>
<feature type="chain" id="PRO_0000136656" description="Tryptophan--tRNA ligase">
    <location>
        <begin position="1"/>
        <end position="333"/>
    </location>
</feature>
<feature type="short sequence motif" description="'HIGH' region" evidence="1">
    <location>
        <begin position="12"/>
        <end position="20"/>
    </location>
</feature>
<feature type="short sequence motif" description="'KMSKS' region" evidence="1">
    <location>
        <begin position="195"/>
        <end position="199"/>
    </location>
</feature>
<feature type="binding site" evidence="1">
    <location>
        <begin position="11"/>
        <end position="13"/>
    </location>
    <ligand>
        <name>ATP</name>
        <dbReference type="ChEBI" id="CHEBI:30616"/>
    </ligand>
</feature>
<feature type="binding site" evidence="1">
    <location>
        <begin position="19"/>
        <end position="20"/>
    </location>
    <ligand>
        <name>ATP</name>
        <dbReference type="ChEBI" id="CHEBI:30616"/>
    </ligand>
</feature>
<feature type="binding site" evidence="1">
    <location>
        <position position="135"/>
    </location>
    <ligand>
        <name>L-tryptophan</name>
        <dbReference type="ChEBI" id="CHEBI:57912"/>
    </ligand>
</feature>
<feature type="binding site" evidence="1">
    <location>
        <begin position="147"/>
        <end position="149"/>
    </location>
    <ligand>
        <name>ATP</name>
        <dbReference type="ChEBI" id="CHEBI:30616"/>
    </ligand>
</feature>
<feature type="binding site" evidence="1">
    <location>
        <position position="186"/>
    </location>
    <ligand>
        <name>ATP</name>
        <dbReference type="ChEBI" id="CHEBI:30616"/>
    </ligand>
</feature>
<feature type="binding site" evidence="1">
    <location>
        <begin position="195"/>
        <end position="199"/>
    </location>
    <ligand>
        <name>ATP</name>
        <dbReference type="ChEBI" id="CHEBI:30616"/>
    </ligand>
</feature>
<gene>
    <name evidence="1" type="primary">trpS</name>
    <name type="ordered locus">PM1621</name>
</gene>